<name>HAP5_SCHPO</name>
<comment type="function">
    <text evidence="3">Component of the CCAAT-bound heteromer, php5 is essential for DNA-binding activity. It is essential for transcription activation of cyc1. It is the linchpin that binds to the subunit association domains (SAD) of php2 and php3 to bring these proteins together.</text>
</comment>
<comment type="subunit">
    <text evidence="1">Two complexes bind CCAAT; complex I, that consists of php2/3/5 and complex II, that consists of php2/3/5/4.</text>
</comment>
<comment type="subcellular location">
    <subcellularLocation>
        <location>Nucleus</location>
    </subcellularLocation>
</comment>
<comment type="similarity">
    <text evidence="4">Belongs to the NFYC/HAP5 subunit family.</text>
</comment>
<reference key="1">
    <citation type="journal article" date="1997" name="Mol. Cell. Biol.">
        <title>The Saccharomyces cerevisiae Hap5p homolog from fission yeast reveals two conserved domains that are essential for assembly of heterotetrameric CCAAT-binding factor.</title>
        <authorList>
            <person name="McNabb D.S."/>
            <person name="Tseng K.A.-S."/>
            <person name="Guarente L."/>
        </authorList>
    </citation>
    <scope>NUCLEOTIDE SEQUENCE [MRNA]</scope>
    <scope>FUNCTION</scope>
</reference>
<reference key="2">
    <citation type="journal article" date="2002" name="Nature">
        <title>The genome sequence of Schizosaccharomyces pombe.</title>
        <authorList>
            <person name="Wood V."/>
            <person name="Gwilliam R."/>
            <person name="Rajandream M.A."/>
            <person name="Lyne M.H."/>
            <person name="Lyne R."/>
            <person name="Stewart A."/>
            <person name="Sgouros J.G."/>
            <person name="Peat N."/>
            <person name="Hayles J."/>
            <person name="Baker S.G."/>
            <person name="Basham D."/>
            <person name="Bowman S."/>
            <person name="Brooks K."/>
            <person name="Brown D."/>
            <person name="Brown S."/>
            <person name="Chillingworth T."/>
            <person name="Churcher C.M."/>
            <person name="Collins M."/>
            <person name="Connor R."/>
            <person name="Cronin A."/>
            <person name="Davis P."/>
            <person name="Feltwell T."/>
            <person name="Fraser A."/>
            <person name="Gentles S."/>
            <person name="Goble A."/>
            <person name="Hamlin N."/>
            <person name="Harris D.E."/>
            <person name="Hidalgo J."/>
            <person name="Hodgson G."/>
            <person name="Holroyd S."/>
            <person name="Hornsby T."/>
            <person name="Howarth S."/>
            <person name="Huckle E.J."/>
            <person name="Hunt S."/>
            <person name="Jagels K."/>
            <person name="James K.D."/>
            <person name="Jones L."/>
            <person name="Jones M."/>
            <person name="Leather S."/>
            <person name="McDonald S."/>
            <person name="McLean J."/>
            <person name="Mooney P."/>
            <person name="Moule S."/>
            <person name="Mungall K.L."/>
            <person name="Murphy L.D."/>
            <person name="Niblett D."/>
            <person name="Odell C."/>
            <person name="Oliver K."/>
            <person name="O'Neil S."/>
            <person name="Pearson D."/>
            <person name="Quail M.A."/>
            <person name="Rabbinowitsch E."/>
            <person name="Rutherford K.M."/>
            <person name="Rutter S."/>
            <person name="Saunders D."/>
            <person name="Seeger K."/>
            <person name="Sharp S."/>
            <person name="Skelton J."/>
            <person name="Simmonds M.N."/>
            <person name="Squares R."/>
            <person name="Squares S."/>
            <person name="Stevens K."/>
            <person name="Taylor K."/>
            <person name="Taylor R.G."/>
            <person name="Tivey A."/>
            <person name="Walsh S.V."/>
            <person name="Warren T."/>
            <person name="Whitehead S."/>
            <person name="Woodward J.R."/>
            <person name="Volckaert G."/>
            <person name="Aert R."/>
            <person name="Robben J."/>
            <person name="Grymonprez B."/>
            <person name="Weltjens I."/>
            <person name="Vanstreels E."/>
            <person name="Rieger M."/>
            <person name="Schaefer M."/>
            <person name="Mueller-Auer S."/>
            <person name="Gabel C."/>
            <person name="Fuchs M."/>
            <person name="Duesterhoeft A."/>
            <person name="Fritzc C."/>
            <person name="Holzer E."/>
            <person name="Moestl D."/>
            <person name="Hilbert H."/>
            <person name="Borzym K."/>
            <person name="Langer I."/>
            <person name="Beck A."/>
            <person name="Lehrach H."/>
            <person name="Reinhardt R."/>
            <person name="Pohl T.M."/>
            <person name="Eger P."/>
            <person name="Zimmermann W."/>
            <person name="Wedler H."/>
            <person name="Wambutt R."/>
            <person name="Purnelle B."/>
            <person name="Goffeau A."/>
            <person name="Cadieu E."/>
            <person name="Dreano S."/>
            <person name="Gloux S."/>
            <person name="Lelaure V."/>
            <person name="Mottier S."/>
            <person name="Galibert F."/>
            <person name="Aves S.J."/>
            <person name="Xiang Z."/>
            <person name="Hunt C."/>
            <person name="Moore K."/>
            <person name="Hurst S.M."/>
            <person name="Lucas M."/>
            <person name="Rochet M."/>
            <person name="Gaillardin C."/>
            <person name="Tallada V.A."/>
            <person name="Garzon A."/>
            <person name="Thode G."/>
            <person name="Daga R.R."/>
            <person name="Cruzado L."/>
            <person name="Jimenez J."/>
            <person name="Sanchez M."/>
            <person name="del Rey F."/>
            <person name="Benito J."/>
            <person name="Dominguez A."/>
            <person name="Revuelta J.L."/>
            <person name="Moreno S."/>
            <person name="Armstrong J."/>
            <person name="Forsburg S.L."/>
            <person name="Cerutti L."/>
            <person name="Lowe T."/>
            <person name="McCombie W.R."/>
            <person name="Paulsen I."/>
            <person name="Potashkin J."/>
            <person name="Shpakovski G.V."/>
            <person name="Ussery D."/>
            <person name="Barrell B.G."/>
            <person name="Nurse P."/>
        </authorList>
    </citation>
    <scope>NUCLEOTIDE SEQUENCE [LARGE SCALE GENOMIC DNA]</scope>
    <source>
        <strain>972 / ATCC 24843</strain>
    </source>
</reference>
<keyword id="KW-0010">Activator</keyword>
<keyword id="KW-0238">DNA-binding</keyword>
<keyword id="KW-0539">Nucleus</keyword>
<keyword id="KW-1185">Reference proteome</keyword>
<keyword id="KW-0804">Transcription</keyword>
<keyword id="KW-0805">Transcription regulation</keyword>
<accession>P79007</accession>
<proteinExistence type="evidence at transcript level"/>
<protein>
    <recommendedName>
        <fullName>Transcriptional activator hap5</fullName>
    </recommendedName>
</protein>
<evidence type="ECO:0000250" key="1"/>
<evidence type="ECO:0000256" key="2">
    <source>
        <dbReference type="SAM" id="MobiDB-lite"/>
    </source>
</evidence>
<evidence type="ECO:0000269" key="3">
    <source>
    </source>
</evidence>
<evidence type="ECO:0000305" key="4"/>
<sequence length="415" mass="46674">MNSIPDSYSLKQGFPEGLGEYVDPSGNPNSQVRIGYGQDSVSRFQQPVPDVDPTAVNHYNASAPIEVASPFDNVTQGLVGSDAQALAEYWQKTIDTLEHDDQAVKTLHLPLARIKKVMKTDDDVKNKMISAEAPFLFAKGSEIFIAELTMRAWLHAKKNQRRTLQRSDIANAVSKSEMYDFLIDIISKDNNNSRASSSQAHMSATQVAAMGGMNGLQPFPTQAGLPNQGFPMPTGSQLPFSNQQSSQPSMQYSSHPSRMQQMQDIDQSMYKQQRLGSEYPQLQMSDNSGNVNQMNMQRPVMVAPYMAEHLYRYPPTHLESGSSAFRLQSSPMGYQMPQFQGNMRPNMQQSQMFDPSAYGMSRRPGSPRQFDQQQRLYSQPNAMMYQTQQGRQGNPMHQQFSQQQNPLSRYSQQPQ</sequence>
<dbReference type="EMBL" id="U88525">
    <property type="protein sequence ID" value="AAB88012.1"/>
    <property type="molecule type" value="mRNA"/>
</dbReference>
<dbReference type="EMBL" id="CU329671">
    <property type="protein sequence ID" value="CAA18291.1"/>
    <property type="molecule type" value="Genomic_DNA"/>
</dbReference>
<dbReference type="PIR" id="T40338">
    <property type="entry name" value="T40338"/>
</dbReference>
<dbReference type="RefSeq" id="NP_596412.1">
    <property type="nucleotide sequence ID" value="NM_001022331.2"/>
</dbReference>
<dbReference type="SMR" id="P79007"/>
<dbReference type="BioGRID" id="276670">
    <property type="interactions" value="259"/>
</dbReference>
<dbReference type="FunCoup" id="P79007">
    <property type="interactions" value="260"/>
</dbReference>
<dbReference type="STRING" id="284812.P79007"/>
<dbReference type="iPTMnet" id="P79007"/>
<dbReference type="PaxDb" id="4896-SPBC3B8.02.1"/>
<dbReference type="EnsemblFungi" id="SPBC3B8.02.1">
    <property type="protein sequence ID" value="SPBC3B8.02.1:pep"/>
    <property type="gene ID" value="SPBC3B8.02"/>
</dbReference>
<dbReference type="GeneID" id="2540133"/>
<dbReference type="KEGG" id="spo:2540133"/>
<dbReference type="PomBase" id="SPBC3B8.02"/>
<dbReference type="VEuPathDB" id="FungiDB:SPBC3B8.02"/>
<dbReference type="eggNOG" id="KOG1657">
    <property type="taxonomic scope" value="Eukaryota"/>
</dbReference>
<dbReference type="HOGENOM" id="CLU_662506_0_0_1"/>
<dbReference type="InParanoid" id="P79007"/>
<dbReference type="OMA" id="YMAEHLY"/>
<dbReference type="PRO" id="PR:P79007"/>
<dbReference type="Proteomes" id="UP000002485">
    <property type="component" value="Chromosome II"/>
</dbReference>
<dbReference type="GO" id="GO:0016602">
    <property type="term" value="C:CCAAT-binding factor complex"/>
    <property type="evidence" value="ECO:0000315"/>
    <property type="project" value="PomBase"/>
</dbReference>
<dbReference type="GO" id="GO:0000785">
    <property type="term" value="C:chromatin"/>
    <property type="evidence" value="ECO:0000314"/>
    <property type="project" value="PomBase"/>
</dbReference>
<dbReference type="GO" id="GO:0005737">
    <property type="term" value="C:cytoplasm"/>
    <property type="evidence" value="ECO:0007005"/>
    <property type="project" value="PomBase"/>
</dbReference>
<dbReference type="GO" id="GO:0005634">
    <property type="term" value="C:nucleus"/>
    <property type="evidence" value="ECO:0007005"/>
    <property type="project" value="PomBase"/>
</dbReference>
<dbReference type="GO" id="GO:0003677">
    <property type="term" value="F:DNA binding"/>
    <property type="evidence" value="ECO:0007669"/>
    <property type="project" value="UniProtKB-KW"/>
</dbReference>
<dbReference type="GO" id="GO:0000981">
    <property type="term" value="F:DNA-binding transcription factor activity, RNA polymerase II-specific"/>
    <property type="evidence" value="ECO:0000318"/>
    <property type="project" value="GO_Central"/>
</dbReference>
<dbReference type="GO" id="GO:0046982">
    <property type="term" value="F:protein heterodimerization activity"/>
    <property type="evidence" value="ECO:0007669"/>
    <property type="project" value="InterPro"/>
</dbReference>
<dbReference type="GO" id="GO:0045944">
    <property type="term" value="P:positive regulation of transcription by RNA polymerase II"/>
    <property type="evidence" value="ECO:0000315"/>
    <property type="project" value="PomBase"/>
</dbReference>
<dbReference type="GO" id="GO:1903715">
    <property type="term" value="P:regulation of aerobic respiration"/>
    <property type="evidence" value="ECO:0000315"/>
    <property type="project" value="PomBase"/>
</dbReference>
<dbReference type="GO" id="GO:0006357">
    <property type="term" value="P:regulation of transcription by RNA polymerase II"/>
    <property type="evidence" value="ECO:0000318"/>
    <property type="project" value="GO_Central"/>
</dbReference>
<dbReference type="CDD" id="cd22908">
    <property type="entry name" value="HFD_NFYC-like"/>
    <property type="match status" value="1"/>
</dbReference>
<dbReference type="FunFam" id="1.10.20.10:FF:000006">
    <property type="entry name" value="Nuclear transcription factor Y subunit gamma"/>
    <property type="match status" value="1"/>
</dbReference>
<dbReference type="Gene3D" id="1.10.20.10">
    <property type="entry name" value="Histone, subunit A"/>
    <property type="match status" value="1"/>
</dbReference>
<dbReference type="InterPro" id="IPR009072">
    <property type="entry name" value="Histone-fold"/>
</dbReference>
<dbReference type="InterPro" id="IPR007125">
    <property type="entry name" value="Histone_H2A/H2B/H3"/>
</dbReference>
<dbReference type="InterPro" id="IPR050568">
    <property type="entry name" value="Transcr_DNA_Rep_Reg"/>
</dbReference>
<dbReference type="PANTHER" id="PTHR10252">
    <property type="entry name" value="HISTONE-LIKE TRANSCRIPTION FACTOR CCAAT-RELATED"/>
    <property type="match status" value="1"/>
</dbReference>
<dbReference type="PANTHER" id="PTHR10252:SF8">
    <property type="entry name" value="NUCLEAR TRANSCRIPTION FACTOR Y SUBUNIT GAMMA"/>
    <property type="match status" value="1"/>
</dbReference>
<dbReference type="Pfam" id="PF00125">
    <property type="entry name" value="Histone"/>
    <property type="match status" value="1"/>
</dbReference>
<dbReference type="SUPFAM" id="SSF47113">
    <property type="entry name" value="Histone-fold"/>
    <property type="match status" value="1"/>
</dbReference>
<feature type="chain" id="PRO_0000218261" description="Transcriptional activator hap5">
    <location>
        <begin position="1"/>
        <end position="415"/>
    </location>
</feature>
<feature type="region of interest" description="Disordered" evidence="2">
    <location>
        <begin position="354"/>
        <end position="415"/>
    </location>
</feature>
<feature type="compositionally biased region" description="Polar residues" evidence="2">
    <location>
        <begin position="369"/>
        <end position="415"/>
    </location>
</feature>
<gene>
    <name type="primary">hap5</name>
    <name type="synonym">php5</name>
    <name type="ORF">SPBC3B8.02</name>
</gene>
<organism>
    <name type="scientific">Schizosaccharomyces pombe (strain 972 / ATCC 24843)</name>
    <name type="common">Fission yeast</name>
    <dbReference type="NCBI Taxonomy" id="284812"/>
    <lineage>
        <taxon>Eukaryota</taxon>
        <taxon>Fungi</taxon>
        <taxon>Dikarya</taxon>
        <taxon>Ascomycota</taxon>
        <taxon>Taphrinomycotina</taxon>
        <taxon>Schizosaccharomycetes</taxon>
        <taxon>Schizosaccharomycetales</taxon>
        <taxon>Schizosaccharomycetaceae</taxon>
        <taxon>Schizosaccharomyces</taxon>
    </lineage>
</organism>